<keyword id="KW-0067">ATP-binding</keyword>
<keyword id="KW-0238">DNA-binding</keyword>
<keyword id="KW-0255">Endonuclease</keyword>
<keyword id="KW-0378">Hydrolase</keyword>
<keyword id="KW-0540">Nuclease</keyword>
<keyword id="KW-0547">Nucleotide-binding</keyword>
<keyword id="KW-1185">Reference proteome</keyword>
<keyword id="KW-0694">RNA-binding</keyword>
<keyword id="KW-0699">rRNA-binding</keyword>
<evidence type="ECO:0000255" key="1">
    <source>
        <dbReference type="HAMAP-Rule" id="MF_00092"/>
    </source>
</evidence>
<evidence type="ECO:0000256" key="2">
    <source>
        <dbReference type="SAM" id="MobiDB-lite"/>
    </source>
</evidence>
<name>MUTS2_HALH5</name>
<protein>
    <recommendedName>
        <fullName evidence="1">Endonuclease MutS2</fullName>
        <ecNumber evidence="1">3.1.-.-</ecNumber>
    </recommendedName>
    <alternativeName>
        <fullName evidence="1">Ribosome-associated protein quality control-upstream factor</fullName>
        <shortName evidence="1">RQC-upstream factor</shortName>
        <shortName evidence="1">RqcU</shortName>
        <ecNumber evidence="1">3.6.4.-</ecNumber>
    </alternativeName>
</protein>
<organism>
    <name type="scientific">Halalkalibacterium halodurans (strain ATCC BAA-125 / DSM 18197 / FERM 7344 / JCM 9153 / C-125)</name>
    <name type="common">Bacillus halodurans</name>
    <dbReference type="NCBI Taxonomy" id="272558"/>
    <lineage>
        <taxon>Bacteria</taxon>
        <taxon>Bacillati</taxon>
        <taxon>Bacillota</taxon>
        <taxon>Bacilli</taxon>
        <taxon>Bacillales</taxon>
        <taxon>Bacillaceae</taxon>
        <taxon>Halalkalibacterium (ex Joshi et al. 2022)</taxon>
    </lineage>
</organism>
<proteinExistence type="inferred from homology"/>
<dbReference type="EC" id="3.1.-.-" evidence="1"/>
<dbReference type="EC" id="3.6.4.-" evidence="1"/>
<dbReference type="EMBL" id="BA000004">
    <property type="protein sequence ID" value="BAB06825.1"/>
    <property type="molecule type" value="Genomic_DNA"/>
</dbReference>
<dbReference type="PIR" id="B84038">
    <property type="entry name" value="B84038"/>
</dbReference>
<dbReference type="RefSeq" id="WP_010899250.1">
    <property type="nucleotide sequence ID" value="NC_002570.2"/>
</dbReference>
<dbReference type="SMR" id="Q9K8A0"/>
<dbReference type="STRING" id="272558.gene:10729018"/>
<dbReference type="GeneID" id="87598630"/>
<dbReference type="KEGG" id="bha:BH3106"/>
<dbReference type="eggNOG" id="COG1193">
    <property type="taxonomic scope" value="Bacteria"/>
</dbReference>
<dbReference type="HOGENOM" id="CLU_011252_2_1_9"/>
<dbReference type="OrthoDB" id="9808166at2"/>
<dbReference type="Proteomes" id="UP000001258">
    <property type="component" value="Chromosome"/>
</dbReference>
<dbReference type="GO" id="GO:0005524">
    <property type="term" value="F:ATP binding"/>
    <property type="evidence" value="ECO:0007669"/>
    <property type="project" value="UniProtKB-UniRule"/>
</dbReference>
<dbReference type="GO" id="GO:0016887">
    <property type="term" value="F:ATP hydrolysis activity"/>
    <property type="evidence" value="ECO:0007669"/>
    <property type="project" value="InterPro"/>
</dbReference>
<dbReference type="GO" id="GO:0140664">
    <property type="term" value="F:ATP-dependent DNA damage sensor activity"/>
    <property type="evidence" value="ECO:0007669"/>
    <property type="project" value="InterPro"/>
</dbReference>
<dbReference type="GO" id="GO:0004519">
    <property type="term" value="F:endonuclease activity"/>
    <property type="evidence" value="ECO:0007669"/>
    <property type="project" value="UniProtKB-UniRule"/>
</dbReference>
<dbReference type="GO" id="GO:0030983">
    <property type="term" value="F:mismatched DNA binding"/>
    <property type="evidence" value="ECO:0007669"/>
    <property type="project" value="InterPro"/>
</dbReference>
<dbReference type="GO" id="GO:0043023">
    <property type="term" value="F:ribosomal large subunit binding"/>
    <property type="evidence" value="ECO:0007669"/>
    <property type="project" value="UniProtKB-UniRule"/>
</dbReference>
<dbReference type="GO" id="GO:0019843">
    <property type="term" value="F:rRNA binding"/>
    <property type="evidence" value="ECO:0007669"/>
    <property type="project" value="UniProtKB-UniRule"/>
</dbReference>
<dbReference type="GO" id="GO:0006298">
    <property type="term" value="P:mismatch repair"/>
    <property type="evidence" value="ECO:0007669"/>
    <property type="project" value="InterPro"/>
</dbReference>
<dbReference type="GO" id="GO:0045910">
    <property type="term" value="P:negative regulation of DNA recombination"/>
    <property type="evidence" value="ECO:0007669"/>
    <property type="project" value="InterPro"/>
</dbReference>
<dbReference type="GO" id="GO:0072344">
    <property type="term" value="P:rescue of stalled ribosome"/>
    <property type="evidence" value="ECO:0007669"/>
    <property type="project" value="UniProtKB-UniRule"/>
</dbReference>
<dbReference type="CDD" id="cd03280">
    <property type="entry name" value="ABC_MutS2"/>
    <property type="match status" value="1"/>
</dbReference>
<dbReference type="CDD" id="cd06503">
    <property type="entry name" value="ATP-synt_Fo_b"/>
    <property type="match status" value="1"/>
</dbReference>
<dbReference type="FunFam" id="3.40.50.300:FF:000830">
    <property type="entry name" value="Endonuclease MutS2"/>
    <property type="match status" value="1"/>
</dbReference>
<dbReference type="Gene3D" id="3.30.1370.110">
    <property type="match status" value="1"/>
</dbReference>
<dbReference type="Gene3D" id="3.40.50.300">
    <property type="entry name" value="P-loop containing nucleotide triphosphate hydrolases"/>
    <property type="match status" value="1"/>
</dbReference>
<dbReference type="HAMAP" id="MF_00092">
    <property type="entry name" value="MutS2"/>
    <property type="match status" value="1"/>
</dbReference>
<dbReference type="InterPro" id="IPR000432">
    <property type="entry name" value="DNA_mismatch_repair_MutS_C"/>
</dbReference>
<dbReference type="InterPro" id="IPR007696">
    <property type="entry name" value="DNA_mismatch_repair_MutS_core"/>
</dbReference>
<dbReference type="InterPro" id="IPR036187">
    <property type="entry name" value="DNA_mismatch_repair_MutS_sf"/>
</dbReference>
<dbReference type="InterPro" id="IPR046893">
    <property type="entry name" value="MSSS"/>
</dbReference>
<dbReference type="InterPro" id="IPR045076">
    <property type="entry name" value="MutS"/>
</dbReference>
<dbReference type="InterPro" id="IPR005747">
    <property type="entry name" value="MutS2"/>
</dbReference>
<dbReference type="InterPro" id="IPR027417">
    <property type="entry name" value="P-loop_NTPase"/>
</dbReference>
<dbReference type="InterPro" id="IPR002625">
    <property type="entry name" value="Smr_dom"/>
</dbReference>
<dbReference type="InterPro" id="IPR036063">
    <property type="entry name" value="Smr_dom_sf"/>
</dbReference>
<dbReference type="NCBIfam" id="TIGR01069">
    <property type="entry name" value="mutS2"/>
    <property type="match status" value="1"/>
</dbReference>
<dbReference type="PANTHER" id="PTHR48466:SF2">
    <property type="entry name" value="OS10G0509000 PROTEIN"/>
    <property type="match status" value="1"/>
</dbReference>
<dbReference type="PANTHER" id="PTHR48466">
    <property type="entry name" value="OS10G0509000 PROTEIN-RELATED"/>
    <property type="match status" value="1"/>
</dbReference>
<dbReference type="Pfam" id="PF20297">
    <property type="entry name" value="MSSS"/>
    <property type="match status" value="1"/>
</dbReference>
<dbReference type="Pfam" id="PF00488">
    <property type="entry name" value="MutS_V"/>
    <property type="match status" value="1"/>
</dbReference>
<dbReference type="Pfam" id="PF01713">
    <property type="entry name" value="Smr"/>
    <property type="match status" value="1"/>
</dbReference>
<dbReference type="PIRSF" id="PIRSF005814">
    <property type="entry name" value="MutS_YshD"/>
    <property type="match status" value="1"/>
</dbReference>
<dbReference type="SMART" id="SM00534">
    <property type="entry name" value="MUTSac"/>
    <property type="match status" value="1"/>
</dbReference>
<dbReference type="SMART" id="SM00533">
    <property type="entry name" value="MUTSd"/>
    <property type="match status" value="1"/>
</dbReference>
<dbReference type="SMART" id="SM00463">
    <property type="entry name" value="SMR"/>
    <property type="match status" value="1"/>
</dbReference>
<dbReference type="SUPFAM" id="SSF48334">
    <property type="entry name" value="DNA repair protein MutS, domain III"/>
    <property type="match status" value="1"/>
</dbReference>
<dbReference type="SUPFAM" id="SSF52540">
    <property type="entry name" value="P-loop containing nucleoside triphosphate hydrolases"/>
    <property type="match status" value="1"/>
</dbReference>
<dbReference type="SUPFAM" id="SSF160443">
    <property type="entry name" value="SMR domain-like"/>
    <property type="match status" value="1"/>
</dbReference>
<dbReference type="PROSITE" id="PS00486">
    <property type="entry name" value="DNA_MISMATCH_REPAIR_2"/>
    <property type="match status" value="1"/>
</dbReference>
<dbReference type="PROSITE" id="PS50828">
    <property type="entry name" value="SMR"/>
    <property type="match status" value="1"/>
</dbReference>
<reference key="1">
    <citation type="journal article" date="2000" name="Nucleic Acids Res.">
        <title>Complete genome sequence of the alkaliphilic bacterium Bacillus halodurans and genomic sequence comparison with Bacillus subtilis.</title>
        <authorList>
            <person name="Takami H."/>
            <person name="Nakasone K."/>
            <person name="Takaki Y."/>
            <person name="Maeno G."/>
            <person name="Sasaki R."/>
            <person name="Masui N."/>
            <person name="Fuji F."/>
            <person name="Hirama C."/>
            <person name="Nakamura Y."/>
            <person name="Ogasawara N."/>
            <person name="Kuhara S."/>
            <person name="Horikoshi K."/>
        </authorList>
    </citation>
    <scope>NUCLEOTIDE SEQUENCE [LARGE SCALE GENOMIC DNA]</scope>
    <source>
        <strain>ATCC BAA-125 / DSM 18197 / FERM 7344 / JCM 9153 / C-125</strain>
    </source>
</reference>
<gene>
    <name evidence="1" type="primary">mutS2</name>
    <name evidence="1" type="synonym">rqcU</name>
    <name type="ordered locus">BH3106</name>
</gene>
<sequence>MERVLRVLEYEKMKKQLLEHVSSSLGRKKVEQLTPSTDFNKVKLWQAQTQEGANMLRLKGHVPLGGIFDIKPHLKRAKIGGLLHASELLEVASTIYGGRQLKKFIETMIEEEEADLPLLGEFARQIVPLTDLERAIKQCIDDNGHVLDSASPTLRTLRHQIRSFEANVRSKLEGITRSSNTAKMLSDAIVTIRNDRYVIPVKQEYRGAFGGIVHDQSASGATLFVEPQAVVEINNQLREAKAKEQREIERILSELSMQVSEHVDDLFVNVDVLAELDFIMARAHYGKAIRATQPILNNRGYLLIKQGRHPLIPDDEIVPIDIELGHSYSSLVITGPNTGGKTVTLKTIGLLTLMAQSGLHVPAEEESELAVFKHVFADIGDEQSIEQSLSTFSSHMTNIVDILGKVDHESLVLFDELGAGTDPTEGAALAIAILDDVYRRGARIVATTHYSELKGYAYNREGVMNASVEFDVETLSPTYRLLIGVPGRSNAFAISKRLGLEEKIIEQAKAHIDEDASQVESMIASLEQSQKSAESDWEEAEKALQEAEQLRLDLQKKLDDLEKEKERILAEAEQQAEQAVKDAKEEAEVIISELRDLQKQGVSVKEHQIIDAKKHLEEAAPKLTKQQKKVKRTAEKKREFKPGDEVKVLSFGQKGHIVEKVSEAEYQVQMGIMKMKVEASDLQLIDRPQPVETKPLATIRGSDHHVKPELDLRGERYEEAMLKVEKYLDDALLAGYASVSIIHGKGTGALRKGVKDLLKRHPHVKSARDGGANEGGLGNTVVELR</sequence>
<comment type="function">
    <text evidence="1">Endonuclease that is involved in the suppression of homologous recombination and thus may have a key role in the control of bacterial genetic diversity.</text>
</comment>
<comment type="function">
    <text evidence="1">Acts as a ribosome collision sensor, splitting the ribosome into its 2 subunits. Detects stalled/collided 70S ribosomes which it binds and splits by an ATP-hydrolysis driven conformational change. Acts upstream of the ribosome quality control system (RQC), a ribosome-associated complex that mediates the extraction of incompletely synthesized nascent chains from stalled ribosomes and their subsequent degradation. Probably generates substrates for RQC.</text>
</comment>
<comment type="subunit">
    <text evidence="1">Homodimer. Binds to stalled ribosomes, contacting rRNA.</text>
</comment>
<comment type="similarity">
    <text evidence="1">Belongs to the DNA mismatch repair MutS family. MutS2 subfamily.</text>
</comment>
<feature type="chain" id="PRO_0000115216" description="Endonuclease MutS2">
    <location>
        <begin position="1"/>
        <end position="785"/>
    </location>
</feature>
<feature type="domain" description="Smr" evidence="1">
    <location>
        <begin position="710"/>
        <end position="785"/>
    </location>
</feature>
<feature type="region of interest" description="Disordered" evidence="2">
    <location>
        <begin position="764"/>
        <end position="785"/>
    </location>
</feature>
<feature type="binding site" evidence="1">
    <location>
        <begin position="335"/>
        <end position="342"/>
    </location>
    <ligand>
        <name>ATP</name>
        <dbReference type="ChEBI" id="CHEBI:30616"/>
    </ligand>
</feature>
<accession>Q9K8A0</accession>